<accession>Q6ALW1</accession>
<dbReference type="EC" id="2.1.1.192" evidence="1"/>
<dbReference type="EMBL" id="CR522870">
    <property type="protein sequence ID" value="CAG36664.1"/>
    <property type="molecule type" value="Genomic_DNA"/>
</dbReference>
<dbReference type="RefSeq" id="WP_011189176.1">
    <property type="nucleotide sequence ID" value="NC_006138.1"/>
</dbReference>
<dbReference type="SMR" id="Q6ALW1"/>
<dbReference type="STRING" id="177439.DP1935"/>
<dbReference type="KEGG" id="dps:DP1935"/>
<dbReference type="eggNOG" id="COG0820">
    <property type="taxonomic scope" value="Bacteria"/>
</dbReference>
<dbReference type="HOGENOM" id="CLU_029101_2_0_7"/>
<dbReference type="OrthoDB" id="9793973at2"/>
<dbReference type="Proteomes" id="UP000000602">
    <property type="component" value="Chromosome"/>
</dbReference>
<dbReference type="GO" id="GO:0005737">
    <property type="term" value="C:cytoplasm"/>
    <property type="evidence" value="ECO:0007669"/>
    <property type="project" value="UniProtKB-SubCell"/>
</dbReference>
<dbReference type="GO" id="GO:0051539">
    <property type="term" value="F:4 iron, 4 sulfur cluster binding"/>
    <property type="evidence" value="ECO:0007669"/>
    <property type="project" value="UniProtKB-UniRule"/>
</dbReference>
<dbReference type="GO" id="GO:0046872">
    <property type="term" value="F:metal ion binding"/>
    <property type="evidence" value="ECO:0007669"/>
    <property type="project" value="UniProtKB-KW"/>
</dbReference>
<dbReference type="GO" id="GO:0070040">
    <property type="term" value="F:rRNA (adenine(2503)-C2-)-methyltransferase activity"/>
    <property type="evidence" value="ECO:0007669"/>
    <property type="project" value="UniProtKB-UniRule"/>
</dbReference>
<dbReference type="GO" id="GO:0019843">
    <property type="term" value="F:rRNA binding"/>
    <property type="evidence" value="ECO:0007669"/>
    <property type="project" value="UniProtKB-UniRule"/>
</dbReference>
<dbReference type="GO" id="GO:0002935">
    <property type="term" value="F:tRNA (adenine(37)-C2)-methyltransferase activity"/>
    <property type="evidence" value="ECO:0007669"/>
    <property type="project" value="UniProtKB-UniRule"/>
</dbReference>
<dbReference type="GO" id="GO:0000049">
    <property type="term" value="F:tRNA binding"/>
    <property type="evidence" value="ECO:0007669"/>
    <property type="project" value="UniProtKB-UniRule"/>
</dbReference>
<dbReference type="GO" id="GO:0070475">
    <property type="term" value="P:rRNA base methylation"/>
    <property type="evidence" value="ECO:0007669"/>
    <property type="project" value="UniProtKB-UniRule"/>
</dbReference>
<dbReference type="GO" id="GO:0030488">
    <property type="term" value="P:tRNA methylation"/>
    <property type="evidence" value="ECO:0007669"/>
    <property type="project" value="UniProtKB-UniRule"/>
</dbReference>
<dbReference type="CDD" id="cd01335">
    <property type="entry name" value="Radical_SAM"/>
    <property type="match status" value="1"/>
</dbReference>
<dbReference type="FunFam" id="3.20.20.70:FF:000014">
    <property type="entry name" value="Probable dual-specificity RNA methyltransferase RlmN"/>
    <property type="match status" value="1"/>
</dbReference>
<dbReference type="Gene3D" id="1.10.150.530">
    <property type="match status" value="1"/>
</dbReference>
<dbReference type="Gene3D" id="3.20.20.70">
    <property type="entry name" value="Aldolase class I"/>
    <property type="match status" value="1"/>
</dbReference>
<dbReference type="HAMAP" id="MF_01849">
    <property type="entry name" value="RNA_methyltr_RlmN"/>
    <property type="match status" value="1"/>
</dbReference>
<dbReference type="InterPro" id="IPR013785">
    <property type="entry name" value="Aldolase_TIM"/>
</dbReference>
<dbReference type="InterPro" id="IPR040072">
    <property type="entry name" value="Methyltransferase_A"/>
</dbReference>
<dbReference type="InterPro" id="IPR048641">
    <property type="entry name" value="RlmN_N"/>
</dbReference>
<dbReference type="InterPro" id="IPR027492">
    <property type="entry name" value="RNA_MTrfase_RlmN"/>
</dbReference>
<dbReference type="InterPro" id="IPR004383">
    <property type="entry name" value="rRNA_lsu_MTrfase_RlmN/Cfr"/>
</dbReference>
<dbReference type="InterPro" id="IPR007197">
    <property type="entry name" value="rSAM"/>
</dbReference>
<dbReference type="NCBIfam" id="TIGR00048">
    <property type="entry name" value="rRNA_mod_RlmN"/>
    <property type="match status" value="1"/>
</dbReference>
<dbReference type="PANTHER" id="PTHR30544">
    <property type="entry name" value="23S RRNA METHYLTRANSFERASE"/>
    <property type="match status" value="1"/>
</dbReference>
<dbReference type="PANTHER" id="PTHR30544:SF5">
    <property type="entry name" value="RADICAL SAM CORE DOMAIN-CONTAINING PROTEIN"/>
    <property type="match status" value="1"/>
</dbReference>
<dbReference type="Pfam" id="PF04055">
    <property type="entry name" value="Radical_SAM"/>
    <property type="match status" value="1"/>
</dbReference>
<dbReference type="Pfam" id="PF21016">
    <property type="entry name" value="RlmN_N"/>
    <property type="match status" value="1"/>
</dbReference>
<dbReference type="PIRSF" id="PIRSF006004">
    <property type="entry name" value="CHP00048"/>
    <property type="match status" value="1"/>
</dbReference>
<dbReference type="SFLD" id="SFLDF00275">
    <property type="entry name" value="adenosine_C2_methyltransferase"/>
    <property type="match status" value="1"/>
</dbReference>
<dbReference type="SFLD" id="SFLDG01062">
    <property type="entry name" value="methyltransferase_(Class_A)"/>
    <property type="match status" value="1"/>
</dbReference>
<dbReference type="SUPFAM" id="SSF102114">
    <property type="entry name" value="Radical SAM enzymes"/>
    <property type="match status" value="1"/>
</dbReference>
<dbReference type="PROSITE" id="PS51918">
    <property type="entry name" value="RADICAL_SAM"/>
    <property type="match status" value="1"/>
</dbReference>
<name>RLMN_DESPS</name>
<comment type="function">
    <text evidence="1">Specifically methylates position 2 of adenine 2503 in 23S rRNA and position 2 of adenine 37 in tRNAs. m2A2503 modification seems to play a crucial role in the proofreading step occurring at the peptidyl transferase center and thus would serve to optimize ribosomal fidelity.</text>
</comment>
<comment type="catalytic activity">
    <reaction evidence="1">
        <text>adenosine(2503) in 23S rRNA + 2 reduced [2Fe-2S]-[ferredoxin] + 2 S-adenosyl-L-methionine = 2-methyladenosine(2503) in 23S rRNA + 5'-deoxyadenosine + L-methionine + 2 oxidized [2Fe-2S]-[ferredoxin] + S-adenosyl-L-homocysteine</text>
        <dbReference type="Rhea" id="RHEA:42916"/>
        <dbReference type="Rhea" id="RHEA-COMP:10000"/>
        <dbReference type="Rhea" id="RHEA-COMP:10001"/>
        <dbReference type="Rhea" id="RHEA-COMP:10152"/>
        <dbReference type="Rhea" id="RHEA-COMP:10282"/>
        <dbReference type="ChEBI" id="CHEBI:17319"/>
        <dbReference type="ChEBI" id="CHEBI:33737"/>
        <dbReference type="ChEBI" id="CHEBI:33738"/>
        <dbReference type="ChEBI" id="CHEBI:57844"/>
        <dbReference type="ChEBI" id="CHEBI:57856"/>
        <dbReference type="ChEBI" id="CHEBI:59789"/>
        <dbReference type="ChEBI" id="CHEBI:74411"/>
        <dbReference type="ChEBI" id="CHEBI:74497"/>
        <dbReference type="EC" id="2.1.1.192"/>
    </reaction>
</comment>
<comment type="catalytic activity">
    <reaction evidence="1">
        <text>adenosine(37) in tRNA + 2 reduced [2Fe-2S]-[ferredoxin] + 2 S-adenosyl-L-methionine = 2-methyladenosine(37) in tRNA + 5'-deoxyadenosine + L-methionine + 2 oxidized [2Fe-2S]-[ferredoxin] + S-adenosyl-L-homocysteine</text>
        <dbReference type="Rhea" id="RHEA:43332"/>
        <dbReference type="Rhea" id="RHEA-COMP:10000"/>
        <dbReference type="Rhea" id="RHEA-COMP:10001"/>
        <dbReference type="Rhea" id="RHEA-COMP:10162"/>
        <dbReference type="Rhea" id="RHEA-COMP:10485"/>
        <dbReference type="ChEBI" id="CHEBI:17319"/>
        <dbReference type="ChEBI" id="CHEBI:33737"/>
        <dbReference type="ChEBI" id="CHEBI:33738"/>
        <dbReference type="ChEBI" id="CHEBI:57844"/>
        <dbReference type="ChEBI" id="CHEBI:57856"/>
        <dbReference type="ChEBI" id="CHEBI:59789"/>
        <dbReference type="ChEBI" id="CHEBI:74411"/>
        <dbReference type="ChEBI" id="CHEBI:74497"/>
        <dbReference type="EC" id="2.1.1.192"/>
    </reaction>
</comment>
<comment type="cofactor">
    <cofactor evidence="1">
        <name>[4Fe-4S] cluster</name>
        <dbReference type="ChEBI" id="CHEBI:49883"/>
    </cofactor>
    <text evidence="1">Binds 1 [4Fe-4S] cluster. The cluster is coordinated with 3 cysteines and an exchangeable S-adenosyl-L-methionine.</text>
</comment>
<comment type="subcellular location">
    <subcellularLocation>
        <location evidence="1">Cytoplasm</location>
    </subcellularLocation>
</comment>
<comment type="miscellaneous">
    <text evidence="1">Reaction proceeds by a ping-pong mechanism involving intermediate methylation of a conserved cysteine residue.</text>
</comment>
<comment type="similarity">
    <text evidence="1">Belongs to the radical SAM superfamily. RlmN family.</text>
</comment>
<gene>
    <name evidence="1" type="primary">rlmN</name>
    <name type="ordered locus">DP1935</name>
</gene>
<evidence type="ECO:0000255" key="1">
    <source>
        <dbReference type="HAMAP-Rule" id="MF_01849"/>
    </source>
</evidence>
<evidence type="ECO:0000255" key="2">
    <source>
        <dbReference type="PROSITE-ProRule" id="PRU01266"/>
    </source>
</evidence>
<protein>
    <recommendedName>
        <fullName evidence="1">Dual-specificity RNA methyltransferase RlmN</fullName>
        <ecNumber evidence="1">2.1.1.192</ecNumber>
    </recommendedName>
    <alternativeName>
        <fullName evidence="1">23S rRNA (adenine(2503)-C(2))-methyltransferase</fullName>
    </alternativeName>
    <alternativeName>
        <fullName evidence="1">23S rRNA m2A2503 methyltransferase</fullName>
    </alternativeName>
    <alternativeName>
        <fullName evidence="1">Ribosomal RNA large subunit methyltransferase N</fullName>
    </alternativeName>
    <alternativeName>
        <fullName evidence="1">tRNA (adenine(37)-C(2))-methyltransferase</fullName>
    </alternativeName>
    <alternativeName>
        <fullName evidence="1">tRNA m2A37 methyltransferase</fullName>
    </alternativeName>
</protein>
<reference key="1">
    <citation type="journal article" date="2004" name="Environ. Microbiol.">
        <title>The genome of Desulfotalea psychrophila, a sulfate-reducing bacterium from permanently cold Arctic sediments.</title>
        <authorList>
            <person name="Rabus R."/>
            <person name="Ruepp A."/>
            <person name="Frickey T."/>
            <person name="Rattei T."/>
            <person name="Fartmann B."/>
            <person name="Stark M."/>
            <person name="Bauer M."/>
            <person name="Zibat A."/>
            <person name="Lombardot T."/>
            <person name="Becker I."/>
            <person name="Amann J."/>
            <person name="Gellner K."/>
            <person name="Teeling H."/>
            <person name="Leuschner W.D."/>
            <person name="Gloeckner F.-O."/>
            <person name="Lupas A.N."/>
            <person name="Amann R."/>
            <person name="Klenk H.-P."/>
        </authorList>
    </citation>
    <scope>NUCLEOTIDE SEQUENCE [LARGE SCALE GENOMIC DNA]</scope>
    <source>
        <strain>DSM 12343 / LSv54</strain>
    </source>
</reference>
<proteinExistence type="inferred from homology"/>
<keyword id="KW-0004">4Fe-4S</keyword>
<keyword id="KW-0963">Cytoplasm</keyword>
<keyword id="KW-1015">Disulfide bond</keyword>
<keyword id="KW-0408">Iron</keyword>
<keyword id="KW-0411">Iron-sulfur</keyword>
<keyword id="KW-0479">Metal-binding</keyword>
<keyword id="KW-0489">Methyltransferase</keyword>
<keyword id="KW-1185">Reference proteome</keyword>
<keyword id="KW-0698">rRNA processing</keyword>
<keyword id="KW-0949">S-adenosyl-L-methionine</keyword>
<keyword id="KW-0808">Transferase</keyword>
<keyword id="KW-0819">tRNA processing</keyword>
<organism>
    <name type="scientific">Desulfotalea psychrophila (strain LSv54 / DSM 12343)</name>
    <dbReference type="NCBI Taxonomy" id="177439"/>
    <lineage>
        <taxon>Bacteria</taxon>
        <taxon>Pseudomonadati</taxon>
        <taxon>Thermodesulfobacteriota</taxon>
        <taxon>Desulfobulbia</taxon>
        <taxon>Desulfobulbales</taxon>
        <taxon>Desulfocapsaceae</taxon>
        <taxon>Desulfotalea</taxon>
    </lineage>
</organism>
<sequence>MQEEITTNREKIDLKNLSQDQLVEFAEKLGQPAFRGRQIMSWLYRPEVRDFEQMTDLAKVFRKLLAENSFFSHFDDPIIERAKDGCVKFGFRLHDGHVIETVLIPEPDRNTLCISSQVGCAMKCTFCMTGGMGFTRNLTPSEIVNQVCAARDFLANEPADKLIGPDRVTNVVYMGMGEPLNNLENVLTSISILTEQKGLDLTGRRITVSTCGIVANMARLGQEAPVNLAISLHAVDDKTRDMLMPVNNRYPLDELLEACRTYPMGKRRRIMFEYIMLAGINDSDTEARTLARKLQEIPCKINLIPYNESPGLPYKSPGMKRILSFQNILREANYSVFIRNSRGEDIAAACGQLATDETTKQS</sequence>
<feature type="chain" id="PRO_0000350152" description="Dual-specificity RNA methyltransferase RlmN">
    <location>
        <begin position="1"/>
        <end position="362"/>
    </location>
</feature>
<feature type="domain" description="Radical SAM core" evidence="2">
    <location>
        <begin position="106"/>
        <end position="345"/>
    </location>
</feature>
<feature type="active site" description="Proton acceptor" evidence="1">
    <location>
        <position position="100"/>
    </location>
</feature>
<feature type="active site" description="S-methylcysteine intermediate" evidence="1">
    <location>
        <position position="350"/>
    </location>
</feature>
<feature type="binding site" evidence="1">
    <location>
        <position position="120"/>
    </location>
    <ligand>
        <name>[4Fe-4S] cluster</name>
        <dbReference type="ChEBI" id="CHEBI:49883"/>
        <note>4Fe-4S-S-AdoMet</note>
    </ligand>
</feature>
<feature type="binding site" evidence="1">
    <location>
        <position position="124"/>
    </location>
    <ligand>
        <name>[4Fe-4S] cluster</name>
        <dbReference type="ChEBI" id="CHEBI:49883"/>
        <note>4Fe-4S-S-AdoMet</note>
    </ligand>
</feature>
<feature type="binding site" evidence="1">
    <location>
        <position position="127"/>
    </location>
    <ligand>
        <name>[4Fe-4S] cluster</name>
        <dbReference type="ChEBI" id="CHEBI:49883"/>
        <note>4Fe-4S-S-AdoMet</note>
    </ligand>
</feature>
<feature type="binding site" evidence="1">
    <location>
        <begin position="177"/>
        <end position="178"/>
    </location>
    <ligand>
        <name>S-adenosyl-L-methionine</name>
        <dbReference type="ChEBI" id="CHEBI:59789"/>
    </ligand>
</feature>
<feature type="binding site" evidence="1">
    <location>
        <position position="209"/>
    </location>
    <ligand>
        <name>S-adenosyl-L-methionine</name>
        <dbReference type="ChEBI" id="CHEBI:59789"/>
    </ligand>
</feature>
<feature type="binding site" evidence="1">
    <location>
        <begin position="231"/>
        <end position="233"/>
    </location>
    <ligand>
        <name>S-adenosyl-L-methionine</name>
        <dbReference type="ChEBI" id="CHEBI:59789"/>
    </ligand>
</feature>
<feature type="binding site" evidence="1">
    <location>
        <position position="307"/>
    </location>
    <ligand>
        <name>S-adenosyl-L-methionine</name>
        <dbReference type="ChEBI" id="CHEBI:59789"/>
    </ligand>
</feature>
<feature type="disulfide bond" description="(transient)" evidence="1">
    <location>
        <begin position="113"/>
        <end position="350"/>
    </location>
</feature>